<feature type="chain" id="PRO_0000322760" description="LexA repressor">
    <location>
        <begin position="1"/>
        <end position="207"/>
    </location>
</feature>
<feature type="DNA-binding region" description="H-T-H motif" evidence="1">
    <location>
        <begin position="28"/>
        <end position="48"/>
    </location>
</feature>
<feature type="active site" description="For autocatalytic cleavage activity" evidence="1">
    <location>
        <position position="130"/>
    </location>
</feature>
<feature type="active site" description="For autocatalytic cleavage activity" evidence="1">
    <location>
        <position position="168"/>
    </location>
</feature>
<feature type="site" description="Cleavage; by autolysis" evidence="1">
    <location>
        <begin position="93"/>
        <end position="94"/>
    </location>
</feature>
<organism>
    <name type="scientific">Staphylococcus aureus (strain bovine RF122 / ET3-1)</name>
    <dbReference type="NCBI Taxonomy" id="273036"/>
    <lineage>
        <taxon>Bacteria</taxon>
        <taxon>Bacillati</taxon>
        <taxon>Bacillota</taxon>
        <taxon>Bacilli</taxon>
        <taxon>Bacillales</taxon>
        <taxon>Staphylococcaceae</taxon>
        <taxon>Staphylococcus</taxon>
    </lineage>
</organism>
<dbReference type="EC" id="3.4.21.88" evidence="1"/>
<dbReference type="EMBL" id="AJ938182">
    <property type="protein sequence ID" value="CAI80886.1"/>
    <property type="molecule type" value="Genomic_DNA"/>
</dbReference>
<dbReference type="RefSeq" id="WP_001208755.1">
    <property type="nucleotide sequence ID" value="NC_007622.1"/>
</dbReference>
<dbReference type="SMR" id="Q2YXS8"/>
<dbReference type="MEROPS" id="S24.001"/>
<dbReference type="KEGG" id="sab:SAB1197c"/>
<dbReference type="HOGENOM" id="CLU_066192_45_1_9"/>
<dbReference type="GO" id="GO:0003677">
    <property type="term" value="F:DNA binding"/>
    <property type="evidence" value="ECO:0007669"/>
    <property type="project" value="UniProtKB-UniRule"/>
</dbReference>
<dbReference type="GO" id="GO:0004252">
    <property type="term" value="F:serine-type endopeptidase activity"/>
    <property type="evidence" value="ECO:0007669"/>
    <property type="project" value="UniProtKB-UniRule"/>
</dbReference>
<dbReference type="GO" id="GO:0006281">
    <property type="term" value="P:DNA repair"/>
    <property type="evidence" value="ECO:0007669"/>
    <property type="project" value="UniProtKB-UniRule"/>
</dbReference>
<dbReference type="GO" id="GO:0006260">
    <property type="term" value="P:DNA replication"/>
    <property type="evidence" value="ECO:0007669"/>
    <property type="project" value="UniProtKB-UniRule"/>
</dbReference>
<dbReference type="GO" id="GO:0045892">
    <property type="term" value="P:negative regulation of DNA-templated transcription"/>
    <property type="evidence" value="ECO:0007669"/>
    <property type="project" value="UniProtKB-UniRule"/>
</dbReference>
<dbReference type="GO" id="GO:0006508">
    <property type="term" value="P:proteolysis"/>
    <property type="evidence" value="ECO:0007669"/>
    <property type="project" value="InterPro"/>
</dbReference>
<dbReference type="GO" id="GO:0009432">
    <property type="term" value="P:SOS response"/>
    <property type="evidence" value="ECO:0007669"/>
    <property type="project" value="UniProtKB-UniRule"/>
</dbReference>
<dbReference type="CDD" id="cd00090">
    <property type="entry name" value="HTH_ARSR"/>
    <property type="match status" value="1"/>
</dbReference>
<dbReference type="CDD" id="cd06529">
    <property type="entry name" value="S24_LexA-like"/>
    <property type="match status" value="1"/>
</dbReference>
<dbReference type="FunFam" id="1.10.10.10:FF:000009">
    <property type="entry name" value="LexA repressor"/>
    <property type="match status" value="1"/>
</dbReference>
<dbReference type="FunFam" id="2.10.109.10:FF:000001">
    <property type="entry name" value="LexA repressor"/>
    <property type="match status" value="1"/>
</dbReference>
<dbReference type="Gene3D" id="2.10.109.10">
    <property type="entry name" value="Umud Fragment, subunit A"/>
    <property type="match status" value="1"/>
</dbReference>
<dbReference type="Gene3D" id="1.10.10.10">
    <property type="entry name" value="Winged helix-like DNA-binding domain superfamily/Winged helix DNA-binding domain"/>
    <property type="match status" value="1"/>
</dbReference>
<dbReference type="HAMAP" id="MF_00015">
    <property type="entry name" value="LexA"/>
    <property type="match status" value="1"/>
</dbReference>
<dbReference type="InterPro" id="IPR011991">
    <property type="entry name" value="ArsR-like_HTH"/>
</dbReference>
<dbReference type="InterPro" id="IPR006200">
    <property type="entry name" value="LexA"/>
</dbReference>
<dbReference type="InterPro" id="IPR039418">
    <property type="entry name" value="LexA-like"/>
</dbReference>
<dbReference type="InterPro" id="IPR036286">
    <property type="entry name" value="LexA/Signal_pep-like_sf"/>
</dbReference>
<dbReference type="InterPro" id="IPR006199">
    <property type="entry name" value="LexA_DNA-bd_dom"/>
</dbReference>
<dbReference type="InterPro" id="IPR050077">
    <property type="entry name" value="LexA_repressor"/>
</dbReference>
<dbReference type="InterPro" id="IPR006197">
    <property type="entry name" value="Peptidase_S24_LexA"/>
</dbReference>
<dbReference type="InterPro" id="IPR015927">
    <property type="entry name" value="Peptidase_S24_S26A/B/C"/>
</dbReference>
<dbReference type="InterPro" id="IPR036388">
    <property type="entry name" value="WH-like_DNA-bd_sf"/>
</dbReference>
<dbReference type="InterPro" id="IPR036390">
    <property type="entry name" value="WH_DNA-bd_sf"/>
</dbReference>
<dbReference type="NCBIfam" id="TIGR00498">
    <property type="entry name" value="lexA"/>
    <property type="match status" value="1"/>
</dbReference>
<dbReference type="PANTHER" id="PTHR33516">
    <property type="entry name" value="LEXA REPRESSOR"/>
    <property type="match status" value="1"/>
</dbReference>
<dbReference type="PANTHER" id="PTHR33516:SF2">
    <property type="entry name" value="LEXA REPRESSOR-RELATED"/>
    <property type="match status" value="1"/>
</dbReference>
<dbReference type="Pfam" id="PF01726">
    <property type="entry name" value="LexA_DNA_bind"/>
    <property type="match status" value="1"/>
</dbReference>
<dbReference type="Pfam" id="PF00717">
    <property type="entry name" value="Peptidase_S24"/>
    <property type="match status" value="1"/>
</dbReference>
<dbReference type="PRINTS" id="PR00726">
    <property type="entry name" value="LEXASERPTASE"/>
</dbReference>
<dbReference type="SUPFAM" id="SSF51306">
    <property type="entry name" value="LexA/Signal peptidase"/>
    <property type="match status" value="1"/>
</dbReference>
<dbReference type="SUPFAM" id="SSF46785">
    <property type="entry name" value="Winged helix' DNA-binding domain"/>
    <property type="match status" value="1"/>
</dbReference>
<gene>
    <name evidence="1" type="primary">lexA</name>
    <name type="ordered locus">SAB1197c</name>
</gene>
<sequence length="207" mass="23332">MRELTKRQSEIYNYIKQVVQMKGYPPSVREIGEAVGLASSSTVHGHLSRLEEKGYIRRDPTKPRAIEIVSDQTNDNINMEETIHVPVIGKVTAGVPITAVENIEEYFPLPEHLTSTHNSDIFILNVVGDSMIEAGILDGDKVIVRSQTIAENGDIIVAMTEEDEATVKRFYKEKNRYRLQPENSTMEPIYLDNVAVIGKVIGLYREM</sequence>
<reference key="1">
    <citation type="journal article" date="2007" name="PLoS ONE">
        <title>Molecular correlates of host specialization in Staphylococcus aureus.</title>
        <authorList>
            <person name="Herron-Olson L."/>
            <person name="Fitzgerald J.R."/>
            <person name="Musser J.M."/>
            <person name="Kapur V."/>
        </authorList>
    </citation>
    <scope>NUCLEOTIDE SEQUENCE [LARGE SCALE GENOMIC DNA]</scope>
    <source>
        <strain>bovine RF122 / ET3-1</strain>
    </source>
</reference>
<keyword id="KW-0068">Autocatalytic cleavage</keyword>
<keyword id="KW-0227">DNA damage</keyword>
<keyword id="KW-0234">DNA repair</keyword>
<keyword id="KW-0235">DNA replication</keyword>
<keyword id="KW-0238">DNA-binding</keyword>
<keyword id="KW-0378">Hydrolase</keyword>
<keyword id="KW-0678">Repressor</keyword>
<keyword id="KW-0742">SOS response</keyword>
<keyword id="KW-0804">Transcription</keyword>
<keyword id="KW-0805">Transcription regulation</keyword>
<accession>Q2YXS8</accession>
<proteinExistence type="inferred from homology"/>
<name>LEXA_STAAB</name>
<comment type="function">
    <text evidence="1">Represses a number of genes involved in the response to DNA damage (SOS response), including recA and lexA. In the presence of single-stranded DNA, RecA interacts with LexA causing an autocatalytic cleavage which disrupts the DNA-binding part of LexA, leading to derepression of the SOS regulon and eventually DNA repair.</text>
</comment>
<comment type="catalytic activity">
    <reaction evidence="1">
        <text>Hydrolysis of Ala-|-Gly bond in repressor LexA.</text>
        <dbReference type="EC" id="3.4.21.88"/>
    </reaction>
</comment>
<comment type="subunit">
    <text evidence="1">Homodimer.</text>
</comment>
<comment type="similarity">
    <text evidence="1">Belongs to the peptidase S24 family.</text>
</comment>
<protein>
    <recommendedName>
        <fullName evidence="1">LexA repressor</fullName>
        <ecNumber evidence="1">3.4.21.88</ecNumber>
    </recommendedName>
</protein>
<evidence type="ECO:0000255" key="1">
    <source>
        <dbReference type="HAMAP-Rule" id="MF_00015"/>
    </source>
</evidence>